<feature type="chain" id="PRO_0000120909" description="Uracil phosphoribosyltransferase">
    <location>
        <begin position="1"/>
        <end position="208"/>
    </location>
</feature>
<feature type="binding site" evidence="1">
    <location>
        <position position="78"/>
    </location>
    <ligand>
        <name>5-phospho-alpha-D-ribose 1-diphosphate</name>
        <dbReference type="ChEBI" id="CHEBI:58017"/>
    </ligand>
</feature>
<feature type="binding site" evidence="1">
    <location>
        <position position="103"/>
    </location>
    <ligand>
        <name>5-phospho-alpha-D-ribose 1-diphosphate</name>
        <dbReference type="ChEBI" id="CHEBI:58017"/>
    </ligand>
</feature>
<feature type="binding site" evidence="1">
    <location>
        <begin position="130"/>
        <end position="138"/>
    </location>
    <ligand>
        <name>5-phospho-alpha-D-ribose 1-diphosphate</name>
        <dbReference type="ChEBI" id="CHEBI:58017"/>
    </ligand>
</feature>
<feature type="binding site" evidence="1">
    <location>
        <position position="193"/>
    </location>
    <ligand>
        <name>uracil</name>
        <dbReference type="ChEBI" id="CHEBI:17568"/>
    </ligand>
</feature>
<feature type="binding site" evidence="1">
    <location>
        <begin position="198"/>
        <end position="200"/>
    </location>
    <ligand>
        <name>uracil</name>
        <dbReference type="ChEBI" id="CHEBI:17568"/>
    </ligand>
</feature>
<feature type="binding site" evidence="1">
    <location>
        <position position="199"/>
    </location>
    <ligand>
        <name>5-phospho-alpha-D-ribose 1-diphosphate</name>
        <dbReference type="ChEBI" id="CHEBI:58017"/>
    </ligand>
</feature>
<evidence type="ECO:0000255" key="1">
    <source>
        <dbReference type="HAMAP-Rule" id="MF_01218"/>
    </source>
</evidence>
<protein>
    <recommendedName>
        <fullName evidence="1">Uracil phosphoribosyltransferase</fullName>
        <ecNumber evidence="1">2.4.2.9</ecNumber>
    </recommendedName>
    <alternativeName>
        <fullName evidence="1">UMP pyrophosphorylase</fullName>
    </alternativeName>
    <alternativeName>
        <fullName evidence="1">UPRTase</fullName>
    </alternativeName>
</protein>
<organism>
    <name type="scientific">Vibrio cholerae serotype O1 (strain ATCC 39315 / El Tor Inaba N16961)</name>
    <dbReference type="NCBI Taxonomy" id="243277"/>
    <lineage>
        <taxon>Bacteria</taxon>
        <taxon>Pseudomonadati</taxon>
        <taxon>Pseudomonadota</taxon>
        <taxon>Gammaproteobacteria</taxon>
        <taxon>Vibrionales</taxon>
        <taxon>Vibrionaceae</taxon>
        <taxon>Vibrio</taxon>
    </lineage>
</organism>
<reference key="1">
    <citation type="journal article" date="2000" name="Nature">
        <title>DNA sequence of both chromosomes of the cholera pathogen Vibrio cholerae.</title>
        <authorList>
            <person name="Heidelberg J.F."/>
            <person name="Eisen J.A."/>
            <person name="Nelson W.C."/>
            <person name="Clayton R.A."/>
            <person name="Gwinn M.L."/>
            <person name="Dodson R.J."/>
            <person name="Haft D.H."/>
            <person name="Hickey E.K."/>
            <person name="Peterson J.D."/>
            <person name="Umayam L.A."/>
            <person name="Gill S.R."/>
            <person name="Nelson K.E."/>
            <person name="Read T.D."/>
            <person name="Tettelin H."/>
            <person name="Richardson D.L."/>
            <person name="Ermolaeva M.D."/>
            <person name="Vamathevan J.J."/>
            <person name="Bass S."/>
            <person name="Qin H."/>
            <person name="Dragoi I."/>
            <person name="Sellers P."/>
            <person name="McDonald L.A."/>
            <person name="Utterback T.R."/>
            <person name="Fleischmann R.D."/>
            <person name="Nierman W.C."/>
            <person name="White O."/>
            <person name="Salzberg S.L."/>
            <person name="Smith H.O."/>
            <person name="Colwell R.R."/>
            <person name="Mekalanos J.J."/>
            <person name="Venter J.C."/>
            <person name="Fraser C.M."/>
        </authorList>
    </citation>
    <scope>NUCLEOTIDE SEQUENCE [LARGE SCALE GENOMIC DNA]</scope>
    <source>
        <strain>ATCC 39315 / El Tor Inaba N16961</strain>
    </source>
</reference>
<accession>Q9KPY7</accession>
<gene>
    <name evidence="1" type="primary">upp</name>
    <name type="ordered locus">VC_2225</name>
</gene>
<proteinExistence type="inferred from homology"/>
<keyword id="KW-0021">Allosteric enzyme</keyword>
<keyword id="KW-0328">Glycosyltransferase</keyword>
<keyword id="KW-0342">GTP-binding</keyword>
<keyword id="KW-0460">Magnesium</keyword>
<keyword id="KW-0547">Nucleotide-binding</keyword>
<keyword id="KW-1185">Reference proteome</keyword>
<keyword id="KW-0808">Transferase</keyword>
<dbReference type="EC" id="2.4.2.9" evidence="1"/>
<dbReference type="EMBL" id="AE003852">
    <property type="protein sequence ID" value="AAF95369.1"/>
    <property type="molecule type" value="Genomic_DNA"/>
</dbReference>
<dbReference type="PIR" id="E82103">
    <property type="entry name" value="E82103"/>
</dbReference>
<dbReference type="RefSeq" id="NP_231856.1">
    <property type="nucleotide sequence ID" value="NC_002505.1"/>
</dbReference>
<dbReference type="RefSeq" id="WP_010895457.1">
    <property type="nucleotide sequence ID" value="NC_002505.1"/>
</dbReference>
<dbReference type="SMR" id="Q9KPY7"/>
<dbReference type="STRING" id="243277.VC_2225"/>
<dbReference type="DNASU" id="2613265"/>
<dbReference type="EnsemblBacteria" id="AAF95369">
    <property type="protein sequence ID" value="AAF95369"/>
    <property type="gene ID" value="VC_2225"/>
</dbReference>
<dbReference type="KEGG" id="vch:VC_2225"/>
<dbReference type="PATRIC" id="fig|243277.26.peg.2123"/>
<dbReference type="eggNOG" id="COG0035">
    <property type="taxonomic scope" value="Bacteria"/>
</dbReference>
<dbReference type="HOGENOM" id="CLU_067096_2_2_6"/>
<dbReference type="UniPathway" id="UPA00574">
    <property type="reaction ID" value="UER00636"/>
</dbReference>
<dbReference type="Proteomes" id="UP000000584">
    <property type="component" value="Chromosome 1"/>
</dbReference>
<dbReference type="GO" id="GO:0005737">
    <property type="term" value="C:cytoplasm"/>
    <property type="evidence" value="ECO:0000318"/>
    <property type="project" value="GO_Central"/>
</dbReference>
<dbReference type="GO" id="GO:0005829">
    <property type="term" value="C:cytosol"/>
    <property type="evidence" value="ECO:0000318"/>
    <property type="project" value="GO_Central"/>
</dbReference>
<dbReference type="GO" id="GO:0005525">
    <property type="term" value="F:GTP binding"/>
    <property type="evidence" value="ECO:0007669"/>
    <property type="project" value="UniProtKB-KW"/>
</dbReference>
<dbReference type="GO" id="GO:0000287">
    <property type="term" value="F:magnesium ion binding"/>
    <property type="evidence" value="ECO:0007669"/>
    <property type="project" value="UniProtKB-UniRule"/>
</dbReference>
<dbReference type="GO" id="GO:0004845">
    <property type="term" value="F:uracil phosphoribosyltransferase activity"/>
    <property type="evidence" value="ECO:0000318"/>
    <property type="project" value="GO_Central"/>
</dbReference>
<dbReference type="GO" id="GO:0044206">
    <property type="term" value="P:UMP salvage"/>
    <property type="evidence" value="ECO:0007669"/>
    <property type="project" value="UniProtKB-UniRule"/>
</dbReference>
<dbReference type="GO" id="GO:0006223">
    <property type="term" value="P:uracil salvage"/>
    <property type="evidence" value="ECO:0007669"/>
    <property type="project" value="InterPro"/>
</dbReference>
<dbReference type="CDD" id="cd06223">
    <property type="entry name" value="PRTases_typeI"/>
    <property type="match status" value="1"/>
</dbReference>
<dbReference type="FunFam" id="3.40.50.2020:FF:000003">
    <property type="entry name" value="Uracil phosphoribosyltransferase"/>
    <property type="match status" value="1"/>
</dbReference>
<dbReference type="Gene3D" id="3.40.50.2020">
    <property type="match status" value="1"/>
</dbReference>
<dbReference type="HAMAP" id="MF_01218_B">
    <property type="entry name" value="Upp_B"/>
    <property type="match status" value="1"/>
</dbReference>
<dbReference type="InterPro" id="IPR000836">
    <property type="entry name" value="PRibTrfase_dom"/>
</dbReference>
<dbReference type="InterPro" id="IPR029057">
    <property type="entry name" value="PRTase-like"/>
</dbReference>
<dbReference type="InterPro" id="IPR034332">
    <property type="entry name" value="Upp_B"/>
</dbReference>
<dbReference type="InterPro" id="IPR050054">
    <property type="entry name" value="UPRTase/APRTase"/>
</dbReference>
<dbReference type="InterPro" id="IPR005765">
    <property type="entry name" value="Ura_phspho_trans"/>
</dbReference>
<dbReference type="NCBIfam" id="NF001097">
    <property type="entry name" value="PRK00129.1"/>
    <property type="match status" value="1"/>
</dbReference>
<dbReference type="NCBIfam" id="TIGR01091">
    <property type="entry name" value="upp"/>
    <property type="match status" value="1"/>
</dbReference>
<dbReference type="PANTHER" id="PTHR32315">
    <property type="entry name" value="ADENINE PHOSPHORIBOSYLTRANSFERASE"/>
    <property type="match status" value="1"/>
</dbReference>
<dbReference type="PANTHER" id="PTHR32315:SF4">
    <property type="entry name" value="URACIL PHOSPHORIBOSYLTRANSFERASE, CHLOROPLASTIC"/>
    <property type="match status" value="1"/>
</dbReference>
<dbReference type="Pfam" id="PF14681">
    <property type="entry name" value="UPRTase"/>
    <property type="match status" value="1"/>
</dbReference>
<dbReference type="SUPFAM" id="SSF53271">
    <property type="entry name" value="PRTase-like"/>
    <property type="match status" value="1"/>
</dbReference>
<sequence length="208" mass="22692">MKIVEVKHPLVKHKLGLMREGDISTKRFRELATEVASLLTYEATSDFETEKVTIEGWNGPVQVDQIKGKKVTVVPILRAGLGMMDGVLEHIPSARISVVGIYRDEETLEPVPYFNKLATNIEERIAMVVDPMLAIGGSMIATIDLLKEKGCNQIKVLVLVAAPEGIAALEKAHPDVELYTAAIDEKLNDKGYIVPGLGDAGDKIFGTK</sequence>
<comment type="function">
    <text evidence="1">Catalyzes the conversion of uracil and 5-phospho-alpha-D-ribose 1-diphosphate (PRPP) to UMP and diphosphate.</text>
</comment>
<comment type="catalytic activity">
    <reaction evidence="1">
        <text>UMP + diphosphate = 5-phospho-alpha-D-ribose 1-diphosphate + uracil</text>
        <dbReference type="Rhea" id="RHEA:13017"/>
        <dbReference type="ChEBI" id="CHEBI:17568"/>
        <dbReference type="ChEBI" id="CHEBI:33019"/>
        <dbReference type="ChEBI" id="CHEBI:57865"/>
        <dbReference type="ChEBI" id="CHEBI:58017"/>
        <dbReference type="EC" id="2.4.2.9"/>
    </reaction>
</comment>
<comment type="cofactor">
    <cofactor evidence="1">
        <name>Mg(2+)</name>
        <dbReference type="ChEBI" id="CHEBI:18420"/>
    </cofactor>
    <text evidence="1">Binds 1 Mg(2+) ion per subunit. The magnesium is bound as Mg-PRPP.</text>
</comment>
<comment type="activity regulation">
    <text evidence="1">Allosterically activated by GTP.</text>
</comment>
<comment type="pathway">
    <text evidence="1">Pyrimidine metabolism; UMP biosynthesis via salvage pathway; UMP from uracil: step 1/1.</text>
</comment>
<comment type="similarity">
    <text evidence="1">Belongs to the UPRTase family.</text>
</comment>
<name>UPP_VIBCH</name>